<keyword id="KW-1185">Reference proteome</keyword>
<keyword id="KW-0687">Ribonucleoprotein</keyword>
<keyword id="KW-0689">Ribosomal protein</keyword>
<reference key="1">
    <citation type="journal article" date="2003" name="J. Bacteriol.">
        <title>Comparative analyses of the complete genome sequences of Pierce's disease and citrus variegated chlorosis strains of Xylella fastidiosa.</title>
        <authorList>
            <person name="Van Sluys M.A."/>
            <person name="de Oliveira M.C."/>
            <person name="Monteiro-Vitorello C.B."/>
            <person name="Miyaki C.Y."/>
            <person name="Furlan L.R."/>
            <person name="Camargo L.E.A."/>
            <person name="da Silva A.C.R."/>
            <person name="Moon D.H."/>
            <person name="Takita M.A."/>
            <person name="Lemos E.G.M."/>
            <person name="Machado M.A."/>
            <person name="Ferro M.I.T."/>
            <person name="da Silva F.R."/>
            <person name="Goldman M.H.S."/>
            <person name="Goldman G.H."/>
            <person name="Lemos M.V.F."/>
            <person name="El-Dorry H."/>
            <person name="Tsai S.M."/>
            <person name="Carrer H."/>
            <person name="Carraro D.M."/>
            <person name="de Oliveira R.C."/>
            <person name="Nunes L.R."/>
            <person name="Siqueira W.J."/>
            <person name="Coutinho L.L."/>
            <person name="Kimura E.T."/>
            <person name="Ferro E.S."/>
            <person name="Harakava R."/>
            <person name="Kuramae E.E."/>
            <person name="Marino C.L."/>
            <person name="Giglioti E."/>
            <person name="Abreu I.L."/>
            <person name="Alves L.M.C."/>
            <person name="do Amaral A.M."/>
            <person name="Baia G.S."/>
            <person name="Blanco S.R."/>
            <person name="Brito M.S."/>
            <person name="Cannavan F.S."/>
            <person name="Celestino A.V."/>
            <person name="da Cunha A.F."/>
            <person name="Fenille R.C."/>
            <person name="Ferro J.A."/>
            <person name="Formighieri E.F."/>
            <person name="Kishi L.T."/>
            <person name="Leoni S.G."/>
            <person name="Oliveira A.R."/>
            <person name="Rosa V.E. Jr."/>
            <person name="Sassaki F.T."/>
            <person name="Sena J.A.D."/>
            <person name="de Souza A.A."/>
            <person name="Truffi D."/>
            <person name="Tsukumo F."/>
            <person name="Yanai G.M."/>
            <person name="Zaros L.G."/>
            <person name="Civerolo E.L."/>
            <person name="Simpson A.J.G."/>
            <person name="Almeida N.F. Jr."/>
            <person name="Setubal J.C."/>
            <person name="Kitajima J.P."/>
        </authorList>
    </citation>
    <scope>NUCLEOTIDE SEQUENCE [LARGE SCALE GENOMIC DNA]</scope>
    <source>
        <strain>Temecula1 / ATCC 700964</strain>
    </source>
</reference>
<sequence>MPITQNYGTGRRKSSTARVFLRKGSGNISVNGRPLDEFFGRETARMIVRQPLELTKNVSNFDILITATGGGTTGQAGAIRLGIARALVEYDTSLKPELRKAGFMTRDPREVERKKVGLHKARRATQFSKR</sequence>
<name>RS9_XYLFT</name>
<gene>
    <name evidence="1" type="primary">rpsI</name>
    <name type="ordered locus">PD_0751</name>
</gene>
<feature type="chain" id="PRO_0000111446" description="Small ribosomal subunit protein uS9">
    <location>
        <begin position="1"/>
        <end position="130"/>
    </location>
</feature>
<feature type="region of interest" description="Disordered" evidence="2">
    <location>
        <begin position="111"/>
        <end position="130"/>
    </location>
</feature>
<feature type="compositionally biased region" description="Basic residues" evidence="2">
    <location>
        <begin position="116"/>
        <end position="130"/>
    </location>
</feature>
<proteinExistence type="inferred from homology"/>
<dbReference type="EMBL" id="AE009442">
    <property type="protein sequence ID" value="AAO28620.1"/>
    <property type="molecule type" value="Genomic_DNA"/>
</dbReference>
<dbReference type="RefSeq" id="WP_004087865.1">
    <property type="nucleotide sequence ID" value="NC_004556.1"/>
</dbReference>
<dbReference type="SMR" id="Q87DD4"/>
<dbReference type="GeneID" id="93904530"/>
<dbReference type="KEGG" id="xft:PD_0751"/>
<dbReference type="HOGENOM" id="CLU_046483_2_1_6"/>
<dbReference type="Proteomes" id="UP000002516">
    <property type="component" value="Chromosome"/>
</dbReference>
<dbReference type="GO" id="GO:0022627">
    <property type="term" value="C:cytosolic small ribosomal subunit"/>
    <property type="evidence" value="ECO:0007669"/>
    <property type="project" value="TreeGrafter"/>
</dbReference>
<dbReference type="GO" id="GO:0003723">
    <property type="term" value="F:RNA binding"/>
    <property type="evidence" value="ECO:0007669"/>
    <property type="project" value="TreeGrafter"/>
</dbReference>
<dbReference type="GO" id="GO:0003735">
    <property type="term" value="F:structural constituent of ribosome"/>
    <property type="evidence" value="ECO:0007669"/>
    <property type="project" value="InterPro"/>
</dbReference>
<dbReference type="GO" id="GO:0006412">
    <property type="term" value="P:translation"/>
    <property type="evidence" value="ECO:0007669"/>
    <property type="project" value="UniProtKB-UniRule"/>
</dbReference>
<dbReference type="FunFam" id="3.30.230.10:FF:000001">
    <property type="entry name" value="30S ribosomal protein S9"/>
    <property type="match status" value="1"/>
</dbReference>
<dbReference type="Gene3D" id="3.30.230.10">
    <property type="match status" value="1"/>
</dbReference>
<dbReference type="HAMAP" id="MF_00532_B">
    <property type="entry name" value="Ribosomal_uS9_B"/>
    <property type="match status" value="1"/>
</dbReference>
<dbReference type="InterPro" id="IPR020568">
    <property type="entry name" value="Ribosomal_Su5_D2-typ_SF"/>
</dbReference>
<dbReference type="InterPro" id="IPR000754">
    <property type="entry name" value="Ribosomal_uS9"/>
</dbReference>
<dbReference type="InterPro" id="IPR023035">
    <property type="entry name" value="Ribosomal_uS9_bac/plastid"/>
</dbReference>
<dbReference type="InterPro" id="IPR020574">
    <property type="entry name" value="Ribosomal_uS9_CS"/>
</dbReference>
<dbReference type="InterPro" id="IPR014721">
    <property type="entry name" value="Ribsml_uS5_D2-typ_fold_subgr"/>
</dbReference>
<dbReference type="NCBIfam" id="NF001099">
    <property type="entry name" value="PRK00132.1"/>
    <property type="match status" value="1"/>
</dbReference>
<dbReference type="PANTHER" id="PTHR21569">
    <property type="entry name" value="RIBOSOMAL PROTEIN S9"/>
    <property type="match status" value="1"/>
</dbReference>
<dbReference type="PANTHER" id="PTHR21569:SF1">
    <property type="entry name" value="SMALL RIBOSOMAL SUBUNIT PROTEIN US9M"/>
    <property type="match status" value="1"/>
</dbReference>
<dbReference type="Pfam" id="PF00380">
    <property type="entry name" value="Ribosomal_S9"/>
    <property type="match status" value="1"/>
</dbReference>
<dbReference type="SUPFAM" id="SSF54211">
    <property type="entry name" value="Ribosomal protein S5 domain 2-like"/>
    <property type="match status" value="1"/>
</dbReference>
<dbReference type="PROSITE" id="PS00360">
    <property type="entry name" value="RIBOSOMAL_S9"/>
    <property type="match status" value="1"/>
</dbReference>
<accession>Q87DD4</accession>
<protein>
    <recommendedName>
        <fullName evidence="1">Small ribosomal subunit protein uS9</fullName>
    </recommendedName>
    <alternativeName>
        <fullName evidence="3">30S ribosomal protein S9</fullName>
    </alternativeName>
</protein>
<evidence type="ECO:0000255" key="1">
    <source>
        <dbReference type="HAMAP-Rule" id="MF_00532"/>
    </source>
</evidence>
<evidence type="ECO:0000256" key="2">
    <source>
        <dbReference type="SAM" id="MobiDB-lite"/>
    </source>
</evidence>
<evidence type="ECO:0000305" key="3"/>
<comment type="similarity">
    <text evidence="1">Belongs to the universal ribosomal protein uS9 family.</text>
</comment>
<organism>
    <name type="scientific">Xylella fastidiosa (strain Temecula1 / ATCC 700964)</name>
    <dbReference type="NCBI Taxonomy" id="183190"/>
    <lineage>
        <taxon>Bacteria</taxon>
        <taxon>Pseudomonadati</taxon>
        <taxon>Pseudomonadota</taxon>
        <taxon>Gammaproteobacteria</taxon>
        <taxon>Lysobacterales</taxon>
        <taxon>Lysobacteraceae</taxon>
        <taxon>Xylella</taxon>
    </lineage>
</organism>